<comment type="function">
    <text evidence="1">Required for the formation of a threonylcarbamoyl group on adenosine at position 37 (t(6)A37) in tRNAs that read codons beginning with adenine. Is involved in the transfer of the threonylcarbamoyl moiety of threonylcarbamoyl-AMP (TC-AMP) to the N6 group of A37, together with TsaE and TsaB. TsaD likely plays a direct catalytic role in this reaction.</text>
</comment>
<comment type="catalytic activity">
    <reaction evidence="1">
        <text>L-threonylcarbamoyladenylate + adenosine(37) in tRNA = N(6)-L-threonylcarbamoyladenosine(37) in tRNA + AMP + H(+)</text>
        <dbReference type="Rhea" id="RHEA:37059"/>
        <dbReference type="Rhea" id="RHEA-COMP:10162"/>
        <dbReference type="Rhea" id="RHEA-COMP:10163"/>
        <dbReference type="ChEBI" id="CHEBI:15378"/>
        <dbReference type="ChEBI" id="CHEBI:73682"/>
        <dbReference type="ChEBI" id="CHEBI:74411"/>
        <dbReference type="ChEBI" id="CHEBI:74418"/>
        <dbReference type="ChEBI" id="CHEBI:456215"/>
        <dbReference type="EC" id="2.3.1.234"/>
    </reaction>
</comment>
<comment type="cofactor">
    <cofactor evidence="1">
        <name>Fe(2+)</name>
        <dbReference type="ChEBI" id="CHEBI:29033"/>
    </cofactor>
    <text evidence="1">Binds 1 Fe(2+) ion per subunit.</text>
</comment>
<comment type="subcellular location">
    <subcellularLocation>
        <location evidence="1">Cytoplasm</location>
    </subcellularLocation>
</comment>
<comment type="similarity">
    <text evidence="1">Belongs to the KAE1 / TsaD family.</text>
</comment>
<feature type="chain" id="PRO_1000024456" description="tRNA N6-adenosine threonylcarbamoyltransferase">
    <location>
        <begin position="1"/>
        <end position="337"/>
    </location>
</feature>
<feature type="binding site" evidence="1">
    <location>
        <position position="111"/>
    </location>
    <ligand>
        <name>Fe cation</name>
        <dbReference type="ChEBI" id="CHEBI:24875"/>
    </ligand>
</feature>
<feature type="binding site" evidence="1">
    <location>
        <position position="115"/>
    </location>
    <ligand>
        <name>Fe cation</name>
        <dbReference type="ChEBI" id="CHEBI:24875"/>
    </ligand>
</feature>
<feature type="binding site" evidence="1">
    <location>
        <begin position="134"/>
        <end position="138"/>
    </location>
    <ligand>
        <name>substrate</name>
    </ligand>
</feature>
<feature type="binding site" evidence="1">
    <location>
        <position position="167"/>
    </location>
    <ligand>
        <name>substrate</name>
    </ligand>
</feature>
<feature type="binding site" evidence="1">
    <location>
        <position position="180"/>
    </location>
    <ligand>
        <name>substrate</name>
    </ligand>
</feature>
<feature type="binding site" evidence="1">
    <location>
        <position position="272"/>
    </location>
    <ligand>
        <name>substrate</name>
    </ligand>
</feature>
<feature type="binding site" evidence="1">
    <location>
        <position position="300"/>
    </location>
    <ligand>
        <name>Fe cation</name>
        <dbReference type="ChEBI" id="CHEBI:24875"/>
    </ligand>
</feature>
<sequence length="337" mass="36007">MRVLGIETSCDETGIAIYDDEKGLLANQLYSQVKLHADYGGVVPELASRDHVRKTVPLIQAALKESGLTAKDIDAVAYTAGPGLVGALLVGATVGRSLAFAWNVPAIPVHHMEGHLLAPMLEDNPPEFPFVALLVSGGHTQLISVTGIGQYELLGESIDDAAGEAFDKTAKLLGLDYPGGPLLSKMAAQGTAGRFVFPRPMTDRPGLDFSFSGLKTFAANTIRDNGTDDQTRADIARAFEDAVVDTLMIKCKRALDQTGFKRLVMAGGVSANRTLRAKLAEMMKKRRGEVFYARPEFCTDNGAMIAYAGMVRFKAGATADLGVSVRPRWPLAELPAA</sequence>
<dbReference type="EC" id="2.3.1.234" evidence="1"/>
<dbReference type="EMBL" id="AE005674">
    <property type="protein sequence ID" value="AAN44581.1"/>
    <property type="molecule type" value="Genomic_DNA"/>
</dbReference>
<dbReference type="EMBL" id="AE014073">
    <property type="protein sequence ID" value="AAP18393.1"/>
    <property type="molecule type" value="Genomic_DNA"/>
</dbReference>
<dbReference type="RefSeq" id="WP_001264365.1">
    <property type="nucleotide sequence ID" value="NZ_WPGW01000061.1"/>
</dbReference>
<dbReference type="SMR" id="Q83Q42"/>
<dbReference type="STRING" id="198214.SF3105"/>
<dbReference type="PaxDb" id="198214-SF3105"/>
<dbReference type="GeneID" id="93778929"/>
<dbReference type="KEGG" id="sfl:SF3105"/>
<dbReference type="KEGG" id="sfx:S3310"/>
<dbReference type="PATRIC" id="fig|198214.7.peg.3684"/>
<dbReference type="HOGENOM" id="CLU_023208_0_2_6"/>
<dbReference type="Proteomes" id="UP000001006">
    <property type="component" value="Chromosome"/>
</dbReference>
<dbReference type="Proteomes" id="UP000002673">
    <property type="component" value="Chromosome"/>
</dbReference>
<dbReference type="GO" id="GO:0005737">
    <property type="term" value="C:cytoplasm"/>
    <property type="evidence" value="ECO:0007669"/>
    <property type="project" value="UniProtKB-SubCell"/>
</dbReference>
<dbReference type="GO" id="GO:0005506">
    <property type="term" value="F:iron ion binding"/>
    <property type="evidence" value="ECO:0007669"/>
    <property type="project" value="UniProtKB-UniRule"/>
</dbReference>
<dbReference type="GO" id="GO:0061711">
    <property type="term" value="F:N(6)-L-threonylcarbamoyladenine synthase activity"/>
    <property type="evidence" value="ECO:0007669"/>
    <property type="project" value="UniProtKB-EC"/>
</dbReference>
<dbReference type="GO" id="GO:0002949">
    <property type="term" value="P:tRNA threonylcarbamoyladenosine modification"/>
    <property type="evidence" value="ECO:0007669"/>
    <property type="project" value="UniProtKB-UniRule"/>
</dbReference>
<dbReference type="CDD" id="cd24097">
    <property type="entry name" value="ASKHA_NBD_TsaD-like"/>
    <property type="match status" value="1"/>
</dbReference>
<dbReference type="FunFam" id="3.30.420.40:FF:000031">
    <property type="entry name" value="tRNA N6-adenosine threonylcarbamoyltransferase"/>
    <property type="match status" value="1"/>
</dbReference>
<dbReference type="Gene3D" id="3.30.420.40">
    <property type="match status" value="2"/>
</dbReference>
<dbReference type="HAMAP" id="MF_01445">
    <property type="entry name" value="TsaD"/>
    <property type="match status" value="1"/>
</dbReference>
<dbReference type="InterPro" id="IPR043129">
    <property type="entry name" value="ATPase_NBD"/>
</dbReference>
<dbReference type="InterPro" id="IPR000905">
    <property type="entry name" value="Gcp-like_dom"/>
</dbReference>
<dbReference type="InterPro" id="IPR017861">
    <property type="entry name" value="KAE1/TsaD"/>
</dbReference>
<dbReference type="InterPro" id="IPR017860">
    <property type="entry name" value="Peptidase_M22_CS"/>
</dbReference>
<dbReference type="InterPro" id="IPR022450">
    <property type="entry name" value="TsaD"/>
</dbReference>
<dbReference type="NCBIfam" id="TIGR00329">
    <property type="entry name" value="gcp_kae1"/>
    <property type="match status" value="1"/>
</dbReference>
<dbReference type="NCBIfam" id="TIGR03723">
    <property type="entry name" value="T6A_TsaD_YgjD"/>
    <property type="match status" value="1"/>
</dbReference>
<dbReference type="PANTHER" id="PTHR11735">
    <property type="entry name" value="TRNA N6-ADENOSINE THREONYLCARBAMOYLTRANSFERASE"/>
    <property type="match status" value="1"/>
</dbReference>
<dbReference type="PANTHER" id="PTHR11735:SF6">
    <property type="entry name" value="TRNA N6-ADENOSINE THREONYLCARBAMOYLTRANSFERASE, MITOCHONDRIAL"/>
    <property type="match status" value="1"/>
</dbReference>
<dbReference type="Pfam" id="PF00814">
    <property type="entry name" value="TsaD"/>
    <property type="match status" value="1"/>
</dbReference>
<dbReference type="PRINTS" id="PR00789">
    <property type="entry name" value="OSIALOPTASE"/>
</dbReference>
<dbReference type="SUPFAM" id="SSF53067">
    <property type="entry name" value="Actin-like ATPase domain"/>
    <property type="match status" value="1"/>
</dbReference>
<dbReference type="PROSITE" id="PS01016">
    <property type="entry name" value="GLYCOPROTEASE"/>
    <property type="match status" value="1"/>
</dbReference>
<reference key="1">
    <citation type="journal article" date="2002" name="Nucleic Acids Res.">
        <title>Genome sequence of Shigella flexneri 2a: insights into pathogenicity through comparison with genomes of Escherichia coli K12 and O157.</title>
        <authorList>
            <person name="Jin Q."/>
            <person name="Yuan Z."/>
            <person name="Xu J."/>
            <person name="Wang Y."/>
            <person name="Shen Y."/>
            <person name="Lu W."/>
            <person name="Wang J."/>
            <person name="Liu H."/>
            <person name="Yang J."/>
            <person name="Yang F."/>
            <person name="Zhang X."/>
            <person name="Zhang J."/>
            <person name="Yang G."/>
            <person name="Wu H."/>
            <person name="Qu D."/>
            <person name="Dong J."/>
            <person name="Sun L."/>
            <person name="Xue Y."/>
            <person name="Zhao A."/>
            <person name="Gao Y."/>
            <person name="Zhu J."/>
            <person name="Kan B."/>
            <person name="Ding K."/>
            <person name="Chen S."/>
            <person name="Cheng H."/>
            <person name="Yao Z."/>
            <person name="He B."/>
            <person name="Chen R."/>
            <person name="Ma D."/>
            <person name="Qiang B."/>
            <person name="Wen Y."/>
            <person name="Hou Y."/>
            <person name="Yu J."/>
        </authorList>
    </citation>
    <scope>NUCLEOTIDE SEQUENCE [LARGE SCALE GENOMIC DNA]</scope>
    <source>
        <strain>301 / Serotype 2a</strain>
    </source>
</reference>
<reference key="2">
    <citation type="journal article" date="2003" name="Infect. Immun.">
        <title>Complete genome sequence and comparative genomics of Shigella flexneri serotype 2a strain 2457T.</title>
        <authorList>
            <person name="Wei J."/>
            <person name="Goldberg M.B."/>
            <person name="Burland V."/>
            <person name="Venkatesan M.M."/>
            <person name="Deng W."/>
            <person name="Fournier G."/>
            <person name="Mayhew G.F."/>
            <person name="Plunkett G. III"/>
            <person name="Rose D.J."/>
            <person name="Darling A."/>
            <person name="Mau B."/>
            <person name="Perna N.T."/>
            <person name="Payne S.M."/>
            <person name="Runyen-Janecky L.J."/>
            <person name="Zhou S."/>
            <person name="Schwartz D.C."/>
            <person name="Blattner F.R."/>
        </authorList>
    </citation>
    <scope>NUCLEOTIDE SEQUENCE [LARGE SCALE GENOMIC DNA]</scope>
    <source>
        <strain>ATCC 700930 / 2457T / Serotype 2a</strain>
    </source>
</reference>
<name>TSAD_SHIFL</name>
<evidence type="ECO:0000255" key="1">
    <source>
        <dbReference type="HAMAP-Rule" id="MF_01445"/>
    </source>
</evidence>
<gene>
    <name evidence="1" type="primary">tsaD</name>
    <name type="synonym">gcp</name>
    <name type="ordered locus">SF3105</name>
    <name type="ordered locus">S3310</name>
</gene>
<protein>
    <recommendedName>
        <fullName evidence="1">tRNA N6-adenosine threonylcarbamoyltransferase</fullName>
        <ecNumber evidence="1">2.3.1.234</ecNumber>
    </recommendedName>
    <alternativeName>
        <fullName evidence="1">N6-L-threonylcarbamoyladenine synthase</fullName>
        <shortName evidence="1">t(6)A synthase</shortName>
    </alternativeName>
    <alternativeName>
        <fullName evidence="1">t(6)A37 threonylcarbamoyladenosine biosynthesis protein TsaD</fullName>
    </alternativeName>
    <alternativeName>
        <fullName evidence="1">tRNA threonylcarbamoyladenosine biosynthesis protein TsaD</fullName>
    </alternativeName>
</protein>
<proteinExistence type="inferred from homology"/>
<accession>Q83Q42</accession>
<accession>Q7BZV1</accession>
<organism>
    <name type="scientific">Shigella flexneri</name>
    <dbReference type="NCBI Taxonomy" id="623"/>
    <lineage>
        <taxon>Bacteria</taxon>
        <taxon>Pseudomonadati</taxon>
        <taxon>Pseudomonadota</taxon>
        <taxon>Gammaproteobacteria</taxon>
        <taxon>Enterobacterales</taxon>
        <taxon>Enterobacteriaceae</taxon>
        <taxon>Shigella</taxon>
    </lineage>
</organism>
<keyword id="KW-0012">Acyltransferase</keyword>
<keyword id="KW-0963">Cytoplasm</keyword>
<keyword id="KW-0408">Iron</keyword>
<keyword id="KW-0479">Metal-binding</keyword>
<keyword id="KW-1185">Reference proteome</keyword>
<keyword id="KW-0808">Transferase</keyword>
<keyword id="KW-0819">tRNA processing</keyword>